<accession>Q147X3</accession>
<accession>Q0IIN2</accession>
<protein>
    <recommendedName>
        <fullName>N-alpha-acetyltransferase 30</fullName>
        <ecNumber evidence="3">2.3.1.256</ecNumber>
    </recommendedName>
    <alternativeName>
        <fullName>N-acetyltransferase 12</fullName>
    </alternativeName>
    <alternativeName>
        <fullName>N-acetyltransferase MAK3 homolog</fullName>
    </alternativeName>
    <alternativeName>
        <fullName>NatC catalytic subunit</fullName>
    </alternativeName>
</protein>
<organism>
    <name type="scientific">Homo sapiens</name>
    <name type="common">Human</name>
    <dbReference type="NCBI Taxonomy" id="9606"/>
    <lineage>
        <taxon>Eukaryota</taxon>
        <taxon>Metazoa</taxon>
        <taxon>Chordata</taxon>
        <taxon>Craniata</taxon>
        <taxon>Vertebrata</taxon>
        <taxon>Euteleostomi</taxon>
        <taxon>Mammalia</taxon>
        <taxon>Eutheria</taxon>
        <taxon>Euarchontoglires</taxon>
        <taxon>Primates</taxon>
        <taxon>Haplorrhini</taxon>
        <taxon>Catarrhini</taxon>
        <taxon>Hominidae</taxon>
        <taxon>Homo</taxon>
    </lineage>
</organism>
<sequence length="362" mass="39320">MAEVPPGPSSLLPPPAPPAPAAVEPRCPFPAGAALACCSEDEEDDEEHEGGGSRSPAGGESATVAAKGHPCLRCPQPPQEQQQLNGLISPELRHLRAAASLKSKVLSVAEVAATTATPDGGPRATATKGAGVHSGERPPHSLSSNARTAVPSPVEAAAASDPAAARNGLAEGTEQEEEEEDEQVRLLSSSLTADCSLRSPSGREVEPGEDRTIRYVRYESELQMPDIMRLITKDLSEPYSIYTYRYFIHNWPQLCFLAMVGEECVGAIVCKLDMHKKMFRRGYIAMLAVDSKYRRNGIGTNLVKKAIYAMVEGDCDEVVLETEITNKSALKLYENLGFVRDKRLFRYYLNGVDALRLKLWLR</sequence>
<dbReference type="EC" id="2.3.1.256" evidence="3"/>
<dbReference type="EMBL" id="CH471061">
    <property type="protein sequence ID" value="EAW80705.1"/>
    <property type="molecule type" value="Genomic_DNA"/>
</dbReference>
<dbReference type="EMBL" id="BC118589">
    <property type="protein sequence ID" value="AAI18590.1"/>
    <property type="molecule type" value="mRNA"/>
</dbReference>
<dbReference type="EMBL" id="BC122557">
    <property type="protein sequence ID" value="AAI22558.1"/>
    <property type="molecule type" value="mRNA"/>
</dbReference>
<dbReference type="CCDS" id="CCDS32088.1">
    <molecule id="Q147X3-1"/>
</dbReference>
<dbReference type="RefSeq" id="NP_001011713.2">
    <molecule id="Q147X3-1"/>
    <property type="nucleotide sequence ID" value="NM_001011713.3"/>
</dbReference>
<dbReference type="PDB" id="7MX2">
    <property type="method" value="EM"/>
    <property type="resolution" value="3.64 A"/>
    <property type="chains" value="A=211-362"/>
</dbReference>
<dbReference type="PDB" id="7RB3">
    <property type="method" value="EM"/>
    <property type="resolution" value="3.10 A"/>
    <property type="chains" value="A=211-362"/>
</dbReference>
<dbReference type="PDBsum" id="7MX2"/>
<dbReference type="PDBsum" id="7RB3"/>
<dbReference type="EMDB" id="EMD-24070"/>
<dbReference type="EMDB" id="EMD-24393"/>
<dbReference type="SMR" id="Q147X3"/>
<dbReference type="BioGRID" id="125797">
    <property type="interactions" value="38"/>
</dbReference>
<dbReference type="ComplexPortal" id="CPX-6275">
    <property type="entry name" value="NatC N-alpha-acetyltransferase complex"/>
</dbReference>
<dbReference type="CORUM" id="Q147X3"/>
<dbReference type="FunCoup" id="Q147X3">
    <property type="interactions" value="3582"/>
</dbReference>
<dbReference type="IntAct" id="Q147X3">
    <property type="interactions" value="21"/>
</dbReference>
<dbReference type="STRING" id="9606.ENSP00000452521"/>
<dbReference type="iPTMnet" id="Q147X3"/>
<dbReference type="PhosphoSitePlus" id="Q147X3"/>
<dbReference type="BioMuta" id="NAA30"/>
<dbReference type="DMDM" id="121948171"/>
<dbReference type="jPOST" id="Q147X3"/>
<dbReference type="MassIVE" id="Q147X3"/>
<dbReference type="PaxDb" id="9606-ENSP00000452521"/>
<dbReference type="PeptideAtlas" id="Q147X3"/>
<dbReference type="ProteomicsDB" id="60184">
    <molecule id="Q147X3-1"/>
</dbReference>
<dbReference type="ProteomicsDB" id="60185">
    <molecule id="Q147X3-2"/>
</dbReference>
<dbReference type="Pumba" id="Q147X3"/>
<dbReference type="Antibodypedia" id="24132">
    <property type="antibodies" value="64 antibodies from 16 providers"/>
</dbReference>
<dbReference type="DNASU" id="122830"/>
<dbReference type="Ensembl" id="ENST00000556492.6">
    <molecule id="Q147X3-1"/>
    <property type="protein sequence ID" value="ENSP00000452521.1"/>
    <property type="gene ID" value="ENSG00000139977.14"/>
</dbReference>
<dbReference type="GeneID" id="122830"/>
<dbReference type="KEGG" id="hsa:122830"/>
<dbReference type="MANE-Select" id="ENST00000556492.6">
    <property type="protein sequence ID" value="ENSP00000452521.1"/>
    <property type="RefSeq nucleotide sequence ID" value="NM_001011713.3"/>
    <property type="RefSeq protein sequence ID" value="NP_001011713.2"/>
</dbReference>
<dbReference type="UCSC" id="uc001xcx.5">
    <molecule id="Q147X3-1"/>
    <property type="organism name" value="human"/>
</dbReference>
<dbReference type="AGR" id="HGNC:19844"/>
<dbReference type="CTD" id="122830"/>
<dbReference type="DisGeNET" id="122830"/>
<dbReference type="GeneCards" id="NAA30"/>
<dbReference type="HGNC" id="HGNC:19844">
    <property type="gene designation" value="NAA30"/>
</dbReference>
<dbReference type="HPA" id="ENSG00000139977">
    <property type="expression patterns" value="Low tissue specificity"/>
</dbReference>
<dbReference type="MIM" id="617989">
    <property type="type" value="gene"/>
</dbReference>
<dbReference type="neXtProt" id="NX_Q147X3"/>
<dbReference type="OpenTargets" id="ENSG00000139977"/>
<dbReference type="PharmGKB" id="PA165479187"/>
<dbReference type="VEuPathDB" id="HostDB:ENSG00000139977"/>
<dbReference type="eggNOG" id="KOG3139">
    <property type="taxonomic scope" value="Eukaryota"/>
</dbReference>
<dbReference type="GeneTree" id="ENSGT00390000005665"/>
<dbReference type="HOGENOM" id="CLU_013985_0_0_1"/>
<dbReference type="InParanoid" id="Q147X3"/>
<dbReference type="OMA" id="VEPRCPF"/>
<dbReference type="OrthoDB" id="249099at2759"/>
<dbReference type="PAN-GO" id="Q147X3">
    <property type="GO annotations" value="3 GO annotations based on evolutionary models"/>
</dbReference>
<dbReference type="PhylomeDB" id="Q147X3"/>
<dbReference type="TreeFam" id="TF105925"/>
<dbReference type="BioCyc" id="MetaCyc:ENSG00000139977-MONOMER"/>
<dbReference type="BRENDA" id="2.3.1.256">
    <property type="organism ID" value="2681"/>
</dbReference>
<dbReference type="PathwayCommons" id="Q147X3"/>
<dbReference type="Reactome" id="R-HSA-6811440">
    <property type="pathway name" value="Retrograde transport at the Trans-Golgi-Network"/>
</dbReference>
<dbReference type="SignaLink" id="Q147X3"/>
<dbReference type="SIGNOR" id="Q147X3"/>
<dbReference type="BioGRID-ORCS" id="122830">
    <property type="hits" value="246 hits in 1173 CRISPR screens"/>
</dbReference>
<dbReference type="ChiTaRS" id="NAA30">
    <property type="organism name" value="human"/>
</dbReference>
<dbReference type="GenomeRNAi" id="122830"/>
<dbReference type="Pharos" id="Q147X3">
    <property type="development level" value="Tbio"/>
</dbReference>
<dbReference type="PRO" id="PR:Q147X3"/>
<dbReference type="Proteomes" id="UP000005640">
    <property type="component" value="Chromosome 14"/>
</dbReference>
<dbReference type="RNAct" id="Q147X3">
    <property type="molecule type" value="protein"/>
</dbReference>
<dbReference type="Bgee" id="ENSG00000139977">
    <property type="expression patterns" value="Expressed in secondary oocyte and 189 other cell types or tissues"/>
</dbReference>
<dbReference type="ExpressionAtlas" id="Q147X3">
    <property type="expression patterns" value="baseline and differential"/>
</dbReference>
<dbReference type="GO" id="GO:0005737">
    <property type="term" value="C:cytoplasm"/>
    <property type="evidence" value="ECO:0000314"/>
    <property type="project" value="UniProtKB"/>
</dbReference>
<dbReference type="GO" id="GO:0005829">
    <property type="term" value="C:cytosol"/>
    <property type="evidence" value="ECO:0000314"/>
    <property type="project" value="HPA"/>
</dbReference>
<dbReference type="GO" id="GO:0031417">
    <property type="term" value="C:NatC complex"/>
    <property type="evidence" value="ECO:0000314"/>
    <property type="project" value="UniProtKB"/>
</dbReference>
<dbReference type="GO" id="GO:0005634">
    <property type="term" value="C:nucleus"/>
    <property type="evidence" value="ECO:0000314"/>
    <property type="project" value="UniProtKB"/>
</dbReference>
<dbReference type="GO" id="GO:0120518">
    <property type="term" value="F:protein N-terminal-methionine acetyltransferase activity"/>
    <property type="evidence" value="ECO:0007669"/>
    <property type="project" value="UniProtKB-EC"/>
</dbReference>
<dbReference type="GO" id="GO:0004596">
    <property type="term" value="F:protein-N-terminal amino-acid acetyltransferase activity"/>
    <property type="evidence" value="ECO:0000314"/>
    <property type="project" value="UniProtKB"/>
</dbReference>
<dbReference type="GO" id="GO:0050821">
    <property type="term" value="P:protein stabilization"/>
    <property type="evidence" value="ECO:0000314"/>
    <property type="project" value="UniProtKB"/>
</dbReference>
<dbReference type="CDD" id="cd04301">
    <property type="entry name" value="NAT_SF"/>
    <property type="match status" value="1"/>
</dbReference>
<dbReference type="FunFam" id="3.40.630.30:FF:000010">
    <property type="entry name" value="Putative N-alpha-acetyltransferase 30"/>
    <property type="match status" value="1"/>
</dbReference>
<dbReference type="Gene3D" id="3.40.630.30">
    <property type="match status" value="1"/>
</dbReference>
<dbReference type="InterPro" id="IPR016181">
    <property type="entry name" value="Acyl_CoA_acyltransferase"/>
</dbReference>
<dbReference type="InterPro" id="IPR000182">
    <property type="entry name" value="GNAT_dom"/>
</dbReference>
<dbReference type="InterPro" id="IPR044542">
    <property type="entry name" value="NAA30-like"/>
</dbReference>
<dbReference type="PANTHER" id="PTHR45896">
    <property type="entry name" value="N-ALPHA-ACETYLTRANSFERASE 30"/>
    <property type="match status" value="1"/>
</dbReference>
<dbReference type="PANTHER" id="PTHR45896:SF1">
    <property type="entry name" value="N-ALPHA-ACETYLTRANSFERASE 30"/>
    <property type="match status" value="1"/>
</dbReference>
<dbReference type="Pfam" id="PF00583">
    <property type="entry name" value="Acetyltransf_1"/>
    <property type="match status" value="1"/>
</dbReference>
<dbReference type="SUPFAM" id="SSF55729">
    <property type="entry name" value="Acyl-CoA N-acyltransferases (Nat)"/>
    <property type="match status" value="1"/>
</dbReference>
<dbReference type="PROSITE" id="PS51186">
    <property type="entry name" value="GNAT"/>
    <property type="match status" value="1"/>
</dbReference>
<proteinExistence type="evidence at protein level"/>
<keyword id="KW-0002">3D-structure</keyword>
<keyword id="KW-0007">Acetylation</keyword>
<keyword id="KW-0012">Acyltransferase</keyword>
<keyword id="KW-0025">Alternative splicing</keyword>
<keyword id="KW-0963">Cytoplasm</keyword>
<keyword id="KW-0539">Nucleus</keyword>
<keyword id="KW-0597">Phosphoprotein</keyword>
<keyword id="KW-1267">Proteomics identification</keyword>
<keyword id="KW-1185">Reference proteome</keyword>
<keyword id="KW-0808">Transferase</keyword>
<gene>
    <name type="primary">NAA30</name>
    <name type="synonym">C14orf35</name>
    <name type="synonym">MAK3</name>
    <name type="synonym">NAT12</name>
</gene>
<comment type="function">
    <text evidence="3 5">Catalytic subunit of the N-terminal acetyltransferase C (NatC) complex (PubMed:19398576, PubMed:37891180). Catalyzes acetylation of the N-terminal methionine residues of peptides beginning with Met-Leu-Ala and Met-Leu-Gly (PubMed:19398576, PubMed:37891180). N-terminal acetylation protects proteins from ubiquitination and degradation by the N-end rule pathway (PubMed:37891180). Necessary for the lysosomal localization and function of ARL8B sugeesting that ARL8B is a NatC substrate (PubMed:19398576).</text>
</comment>
<comment type="catalytic activity">
    <reaction evidence="3 5">
        <text>N-terminal L-methionyl-L-leucyl-[protein] + acetyl-CoA = N-terminal N(alpha)-acetyl-L-methionyl-L-leucyl-[protein] + CoA + H(+)</text>
        <dbReference type="Rhea" id="RHEA:50520"/>
        <dbReference type="Rhea" id="RHEA-COMP:12711"/>
        <dbReference type="Rhea" id="RHEA-COMP:12712"/>
        <dbReference type="ChEBI" id="CHEBI:15378"/>
        <dbReference type="ChEBI" id="CHEBI:57287"/>
        <dbReference type="ChEBI" id="CHEBI:57288"/>
        <dbReference type="ChEBI" id="CHEBI:133377"/>
        <dbReference type="ChEBI" id="CHEBI:133378"/>
        <dbReference type="EC" id="2.3.1.256"/>
    </reaction>
</comment>
<comment type="catalytic activity">
    <reaction evidence="3 5">
        <text>N-terminal L-methionyl-L-isoleucyl-[protein] + acetyl-CoA = N-terminal N(alpha)-acetyl-L-methionyl-L-isoleucyl-[protein] + CoA + H(+)</text>
        <dbReference type="Rhea" id="RHEA:50524"/>
        <dbReference type="Rhea" id="RHEA-COMP:12713"/>
        <dbReference type="Rhea" id="RHEA-COMP:12714"/>
        <dbReference type="ChEBI" id="CHEBI:15378"/>
        <dbReference type="ChEBI" id="CHEBI:57287"/>
        <dbReference type="ChEBI" id="CHEBI:57288"/>
        <dbReference type="ChEBI" id="CHEBI:133379"/>
        <dbReference type="ChEBI" id="CHEBI:133380"/>
        <dbReference type="EC" id="2.3.1.256"/>
    </reaction>
</comment>
<comment type="catalytic activity">
    <reaction evidence="3 5">
        <text>N-terminal L-methionyl-L-phenylalanyl-[protein] + acetyl-CoA = N-terminal N(alpha)-acetyl-L-methionyl-L-phenylalanyl-[protein] + CoA + H(+)</text>
        <dbReference type="Rhea" id="RHEA:50528"/>
        <dbReference type="Rhea" id="RHEA-COMP:12715"/>
        <dbReference type="Rhea" id="RHEA-COMP:12716"/>
        <dbReference type="ChEBI" id="CHEBI:15378"/>
        <dbReference type="ChEBI" id="CHEBI:57287"/>
        <dbReference type="ChEBI" id="CHEBI:57288"/>
        <dbReference type="ChEBI" id="CHEBI:133382"/>
        <dbReference type="ChEBI" id="CHEBI:133383"/>
        <dbReference type="EC" id="2.3.1.256"/>
    </reaction>
</comment>
<comment type="catalytic activity">
    <reaction evidence="3">
        <text>N-terminal L-methionyl-L-tryptophyl-[protein] + acetyl-CoA = N-terminal N(alpha)-acetyl-L-methionyl-L-tryptophyl-[protein] + CoA + H(+)</text>
        <dbReference type="Rhea" id="RHEA:50560"/>
        <dbReference type="Rhea" id="RHEA-COMP:12724"/>
        <dbReference type="Rhea" id="RHEA-COMP:12725"/>
        <dbReference type="ChEBI" id="CHEBI:15378"/>
        <dbReference type="ChEBI" id="CHEBI:57287"/>
        <dbReference type="ChEBI" id="CHEBI:57288"/>
        <dbReference type="ChEBI" id="CHEBI:133386"/>
        <dbReference type="ChEBI" id="CHEBI:133387"/>
        <dbReference type="EC" id="2.3.1.256"/>
    </reaction>
</comment>
<comment type="catalytic activity">
    <reaction evidence="3 5">
        <text>N-terminal L-methionyl-L-tyrosyl-[protein] + acetyl-CoA = N-terminal N(alpha)-acetyl-L-methionyl-L-tyrosyl-[protein] + CoA + H(+)</text>
        <dbReference type="Rhea" id="RHEA:50532"/>
        <dbReference type="Rhea" id="RHEA-COMP:12717"/>
        <dbReference type="Rhea" id="RHEA-COMP:12718"/>
        <dbReference type="ChEBI" id="CHEBI:15378"/>
        <dbReference type="ChEBI" id="CHEBI:57287"/>
        <dbReference type="ChEBI" id="CHEBI:57288"/>
        <dbReference type="ChEBI" id="CHEBI:133384"/>
        <dbReference type="ChEBI" id="CHEBI:133385"/>
        <dbReference type="EC" id="2.3.1.256"/>
    </reaction>
</comment>
<comment type="subunit">
    <text evidence="3">Component of the N-terminal acetyltransferase C (NatC) complex, which is composed of NAA35, NAA38 and NAA30.</text>
</comment>
<comment type="interaction">
    <interactant intactId="EBI-9106461">
        <id>Q147X3</id>
    </interactant>
    <interactant intactId="EBI-9106478">
        <id>Q5VZE5</id>
        <label>NAA35</label>
    </interactant>
    <organismsDiffer>false</organismsDiffer>
    <experiments>5</experiments>
</comment>
<comment type="subcellular location">
    <subcellularLocation>
        <location evidence="3 4">Cytoplasm</location>
    </subcellularLocation>
    <subcellularLocation>
        <location evidence="4">Nucleus</location>
    </subcellularLocation>
</comment>
<comment type="alternative products">
    <event type="alternative splicing"/>
    <isoform>
        <id>Q147X3-1</id>
        <name>1</name>
        <sequence type="displayed"/>
    </isoform>
    <isoform>
        <id>Q147X3-2</id>
        <name>2</name>
        <sequence type="described" ref="VSP_031581"/>
    </isoform>
</comment>
<comment type="similarity">
    <text evidence="7">Belongs to the acetyltransferase family. MAK3 subfamily.</text>
</comment>
<feature type="chain" id="PRO_0000320032" description="N-alpha-acetyltransferase 30">
    <location>
        <begin position="1"/>
        <end position="362"/>
    </location>
</feature>
<feature type="domain" description="N-acetyltransferase" evidence="1">
    <location>
        <begin position="214"/>
        <end position="362"/>
    </location>
</feature>
<feature type="region of interest" description="Disordered" evidence="2">
    <location>
        <begin position="1"/>
        <end position="26"/>
    </location>
</feature>
<feature type="region of interest" description="Disordered" evidence="2">
    <location>
        <begin position="38"/>
        <end position="88"/>
    </location>
</feature>
<feature type="region of interest" description="Disordered" evidence="2">
    <location>
        <begin position="113"/>
        <end position="182"/>
    </location>
</feature>
<feature type="compositionally biased region" description="Pro residues" evidence="2">
    <location>
        <begin position="1"/>
        <end position="20"/>
    </location>
</feature>
<feature type="compositionally biased region" description="Acidic residues" evidence="2">
    <location>
        <begin position="39"/>
        <end position="48"/>
    </location>
</feature>
<feature type="compositionally biased region" description="Low complexity" evidence="2">
    <location>
        <begin position="149"/>
        <end position="165"/>
    </location>
</feature>
<feature type="compositionally biased region" description="Acidic residues" evidence="2">
    <location>
        <begin position="173"/>
        <end position="182"/>
    </location>
</feature>
<feature type="modified residue" description="Phosphoserine" evidence="8">
    <location>
        <position position="39"/>
    </location>
</feature>
<feature type="modified residue" description="Phosphoserine" evidence="8">
    <location>
        <position position="55"/>
    </location>
</feature>
<feature type="modified residue" description="Phosphothreonine" evidence="8">
    <location>
        <position position="117"/>
    </location>
</feature>
<feature type="modified residue" description="Phosphoserine" evidence="8 9 11">
    <location>
        <position position="152"/>
    </location>
</feature>
<feature type="modified residue" description="Phosphoserine" evidence="11">
    <location>
        <position position="190"/>
    </location>
</feature>
<feature type="modified residue" description="Phosphoserine" evidence="8">
    <location>
        <position position="196"/>
    </location>
</feature>
<feature type="modified residue" description="Phosphoserine" evidence="8 11">
    <location>
        <position position="199"/>
    </location>
</feature>
<feature type="modified residue" description="N6-acetyllysine" evidence="10">
    <location>
        <position position="233"/>
    </location>
</feature>
<feature type="splice variant" id="VSP_031581" description="In isoform 2." evidence="6">
    <location>
        <begin position="43"/>
        <end position="79"/>
    </location>
</feature>
<feature type="strand" evidence="12">
    <location>
        <begin position="214"/>
        <end position="216"/>
    </location>
</feature>
<feature type="strand" evidence="12">
    <location>
        <begin position="220"/>
        <end position="223"/>
    </location>
</feature>
<feature type="helix" evidence="12">
    <location>
        <begin position="224"/>
        <end position="232"/>
    </location>
</feature>
<feature type="helix" evidence="12">
    <location>
        <begin position="241"/>
        <end position="250"/>
    </location>
</feature>
<feature type="strand" evidence="12">
    <location>
        <begin position="256"/>
        <end position="260"/>
    </location>
</feature>
<feature type="strand" evidence="12">
    <location>
        <begin position="263"/>
        <end position="273"/>
    </location>
</feature>
<feature type="strand" evidence="12">
    <location>
        <begin position="281"/>
        <end position="289"/>
    </location>
</feature>
<feature type="helix" evidence="12">
    <location>
        <begin position="291"/>
        <end position="293"/>
    </location>
</feature>
<feature type="helix" evidence="12">
    <location>
        <begin position="298"/>
        <end position="312"/>
    </location>
</feature>
<feature type="strand" evidence="12">
    <location>
        <begin position="316"/>
        <end position="323"/>
    </location>
</feature>
<feature type="helix" evidence="12">
    <location>
        <begin position="327"/>
        <end position="335"/>
    </location>
</feature>
<feature type="strand" evidence="12">
    <location>
        <begin position="339"/>
        <end position="346"/>
    </location>
</feature>
<feature type="strand" evidence="12">
    <location>
        <begin position="354"/>
        <end position="360"/>
    </location>
</feature>
<evidence type="ECO:0000255" key="1">
    <source>
        <dbReference type="PROSITE-ProRule" id="PRU00532"/>
    </source>
</evidence>
<evidence type="ECO:0000256" key="2">
    <source>
        <dbReference type="SAM" id="MobiDB-lite"/>
    </source>
</evidence>
<evidence type="ECO:0000269" key="3">
    <source>
    </source>
</evidence>
<evidence type="ECO:0000269" key="4">
    <source>
    </source>
</evidence>
<evidence type="ECO:0000269" key="5">
    <source>
    </source>
</evidence>
<evidence type="ECO:0000303" key="6">
    <source>
    </source>
</evidence>
<evidence type="ECO:0000305" key="7"/>
<evidence type="ECO:0007744" key="8">
    <source>
    </source>
</evidence>
<evidence type="ECO:0007744" key="9">
    <source>
    </source>
</evidence>
<evidence type="ECO:0007744" key="10">
    <source>
    </source>
</evidence>
<evidence type="ECO:0007744" key="11">
    <source>
    </source>
</evidence>
<evidence type="ECO:0007829" key="12">
    <source>
        <dbReference type="PDB" id="7RB3"/>
    </source>
</evidence>
<reference key="1">
    <citation type="submission" date="2005-07" db="EMBL/GenBank/DDBJ databases">
        <authorList>
            <person name="Mural R.J."/>
            <person name="Istrail S."/>
            <person name="Sutton G.G."/>
            <person name="Florea L."/>
            <person name="Halpern A.L."/>
            <person name="Mobarry C.M."/>
            <person name="Lippert R."/>
            <person name="Walenz B."/>
            <person name="Shatkay H."/>
            <person name="Dew I."/>
            <person name="Miller J.R."/>
            <person name="Flanigan M.J."/>
            <person name="Edwards N.J."/>
            <person name="Bolanos R."/>
            <person name="Fasulo D."/>
            <person name="Halldorsson B.V."/>
            <person name="Hannenhalli S."/>
            <person name="Turner R."/>
            <person name="Yooseph S."/>
            <person name="Lu F."/>
            <person name="Nusskern D.R."/>
            <person name="Shue B.C."/>
            <person name="Zheng X.H."/>
            <person name="Zhong F."/>
            <person name="Delcher A.L."/>
            <person name="Huson D.H."/>
            <person name="Kravitz S.A."/>
            <person name="Mouchard L."/>
            <person name="Reinert K."/>
            <person name="Remington K.A."/>
            <person name="Clark A.G."/>
            <person name="Waterman M.S."/>
            <person name="Eichler E.E."/>
            <person name="Adams M.D."/>
            <person name="Hunkapiller M.W."/>
            <person name="Myers E.W."/>
            <person name="Venter J.C."/>
        </authorList>
    </citation>
    <scope>NUCLEOTIDE SEQUENCE [LARGE SCALE GENOMIC DNA]</scope>
</reference>
<reference key="2">
    <citation type="journal article" date="2004" name="Genome Res.">
        <title>The status, quality, and expansion of the NIH full-length cDNA project: the Mammalian Gene Collection (MGC).</title>
        <authorList>
            <consortium name="The MGC Project Team"/>
        </authorList>
    </citation>
    <scope>NUCLEOTIDE SEQUENCE [LARGE SCALE MRNA] (ISOFORMS 1 AND 2)</scope>
</reference>
<reference key="3">
    <citation type="journal article" date="2008" name="Mol. Cell">
        <title>Kinase-selective enrichment enables quantitative phosphoproteomics of the kinome across the cell cycle.</title>
        <authorList>
            <person name="Daub H."/>
            <person name="Olsen J.V."/>
            <person name="Bairlein M."/>
            <person name="Gnad F."/>
            <person name="Oppermann F.S."/>
            <person name="Korner R."/>
            <person name="Greff Z."/>
            <person name="Keri G."/>
            <person name="Stemmann O."/>
            <person name="Mann M."/>
        </authorList>
    </citation>
    <scope>PHOSPHORYLATION [LARGE SCALE ANALYSIS] AT SER-152</scope>
    <scope>IDENTIFICATION BY MASS SPECTROMETRY [LARGE SCALE ANALYSIS]</scope>
    <source>
        <tissue>Cervix carcinoma</tissue>
    </source>
</reference>
<reference key="4">
    <citation type="journal article" date="2008" name="Proc. Natl. Acad. Sci. U.S.A.">
        <title>A quantitative atlas of mitotic phosphorylation.</title>
        <authorList>
            <person name="Dephoure N."/>
            <person name="Zhou C."/>
            <person name="Villen J."/>
            <person name="Beausoleil S.A."/>
            <person name="Bakalarski C.E."/>
            <person name="Elledge S.J."/>
            <person name="Gygi S.P."/>
        </authorList>
    </citation>
    <scope>PHOSPHORYLATION [LARGE SCALE ANALYSIS] AT SER-39; SER-55; THR-117; SER-152; SER-196 AND SER-199</scope>
    <scope>IDENTIFICATION BY MASS SPECTROMETRY [LARGE SCALE ANALYSIS]</scope>
    <source>
        <tissue>Cervix carcinoma</tissue>
    </source>
</reference>
<reference key="5">
    <citation type="journal article" date="2009" name="BMC Proc.">
        <title>A synopsis of eukaryotic Nalpha-terminal acetyltransferases: nomenclature, subunits and substrates.</title>
        <authorList>
            <person name="Polevoda B."/>
            <person name="Arnesen T."/>
            <person name="Sherman F."/>
        </authorList>
    </citation>
    <scope>NOMENCLATURE</scope>
</reference>
<reference key="6">
    <citation type="journal article" date="2009" name="Mol. Cell. Biol.">
        <title>Knockdown of human N alpha-terminal acetyltransferase complex C leads to p53-dependent apoptosis and aberrant human Arl8b localization.</title>
        <authorList>
            <person name="Starheim K.K."/>
            <person name="Gromyko D."/>
            <person name="Evjenth R."/>
            <person name="Ryningen A."/>
            <person name="Varhaug J.E."/>
            <person name="Lillehaug J.R."/>
            <person name="Arnesen T."/>
        </authorList>
    </citation>
    <scope>FUNCTION</scope>
    <scope>CATALYTIC ACTIVITY</scope>
    <scope>IDENTIFICATION IN NATC COMPLEX</scope>
    <scope>SUBCELLULAR LOCATION</scope>
</reference>
<reference key="7">
    <citation type="journal article" date="2009" name="Science">
        <title>Lysine acetylation targets protein complexes and co-regulates major cellular functions.</title>
        <authorList>
            <person name="Choudhary C."/>
            <person name="Kumar C."/>
            <person name="Gnad F."/>
            <person name="Nielsen M.L."/>
            <person name="Rehman M."/>
            <person name="Walther T.C."/>
            <person name="Olsen J.V."/>
            <person name="Mann M."/>
        </authorList>
    </citation>
    <scope>ACETYLATION [LARGE SCALE ANALYSIS] AT LYS-233</scope>
    <scope>IDENTIFICATION BY MASS SPECTROMETRY [LARGE SCALE ANALYSIS]</scope>
</reference>
<reference key="8">
    <citation type="journal article" date="2011" name="BMC Syst. Biol.">
        <title>Initial characterization of the human central proteome.</title>
        <authorList>
            <person name="Burkard T.R."/>
            <person name="Planyavsky M."/>
            <person name="Kaupe I."/>
            <person name="Breitwieser F.P."/>
            <person name="Buerckstuemmer T."/>
            <person name="Bennett K.L."/>
            <person name="Superti-Furga G."/>
            <person name="Colinge J."/>
        </authorList>
    </citation>
    <scope>IDENTIFICATION BY MASS SPECTROMETRY [LARGE SCALE ANALYSIS]</scope>
</reference>
<reference key="9">
    <citation type="journal article" date="2013" name="J. Proteome Res.">
        <title>Toward a comprehensive characterization of a human cancer cell phosphoproteome.</title>
        <authorList>
            <person name="Zhou H."/>
            <person name="Di Palma S."/>
            <person name="Preisinger C."/>
            <person name="Peng M."/>
            <person name="Polat A.N."/>
            <person name="Heck A.J."/>
            <person name="Mohammed S."/>
        </authorList>
    </citation>
    <scope>PHOSPHORYLATION [LARGE SCALE ANALYSIS] AT SER-152; SER-190 AND SER-199</scope>
    <scope>IDENTIFICATION BY MASS SPECTROMETRY [LARGE SCALE ANALYSIS]</scope>
    <source>
        <tissue>Cervix carcinoma</tissue>
        <tissue>Erythroleukemia</tissue>
    </source>
</reference>
<reference key="10">
    <citation type="journal article" date="2014" name="J. Proteomics">
        <title>An enzyme assisted RP-RPLC approach for in-depth analysis of human liver phosphoproteome.</title>
        <authorList>
            <person name="Bian Y."/>
            <person name="Song C."/>
            <person name="Cheng K."/>
            <person name="Dong M."/>
            <person name="Wang F."/>
            <person name="Huang J."/>
            <person name="Sun D."/>
            <person name="Wang L."/>
            <person name="Ye M."/>
            <person name="Zou H."/>
        </authorList>
    </citation>
    <scope>IDENTIFICATION BY MASS SPECTROMETRY [LARGE SCALE ANALYSIS]</scope>
    <source>
        <tissue>Liver</tissue>
    </source>
</reference>
<reference key="11">
    <citation type="journal article" date="2015" name="Cell Rep.">
        <title>An organellar nalpha-acetyltransferase, naa60, acetylates cytosolic N termini of transmembrane proteins and maintains Golgi integrity.</title>
        <authorList>
            <person name="Aksnes H."/>
            <person name="Van Damme P."/>
            <person name="Goris M."/>
            <person name="Starheim K.K."/>
            <person name="Marie M."/>
            <person name="Stoeve S.I."/>
            <person name="Hoel C."/>
            <person name="Kalvik T.V."/>
            <person name="Hole K."/>
            <person name="Glomnes N."/>
            <person name="Furnes C."/>
            <person name="Ljostveit S."/>
            <person name="Ziegler M."/>
            <person name="Niere M."/>
            <person name="Gevaert K."/>
            <person name="Arnesen T."/>
        </authorList>
    </citation>
    <scope>SUBCELLULAR LOCATION</scope>
</reference>
<reference key="12">
    <citation type="journal article" date="2023" name="Nat. Commun.">
        <title>N-terminal acetylation shields proteins from degradation and promotes age-dependent motility and longevity.</title>
        <authorList>
            <person name="Varland S."/>
            <person name="Silva R.D."/>
            <person name="Kjosaas I."/>
            <person name="Faustino A."/>
            <person name="Bogaert A."/>
            <person name="Billmann M."/>
            <person name="Boukhatmi H."/>
            <person name="Kellen B."/>
            <person name="Costanzo M."/>
            <person name="Drazic A."/>
            <person name="Osberg C."/>
            <person name="Chan K."/>
            <person name="Zhang X."/>
            <person name="Tong A.H.Y."/>
            <person name="Andreazza S."/>
            <person name="Lee J.J."/>
            <person name="Nedyalkova L."/>
            <person name="Usaj M."/>
            <person name="Whitworth A.J."/>
            <person name="Andrews B.J."/>
            <person name="Moffat J."/>
            <person name="Myers C.L."/>
            <person name="Gevaert K."/>
            <person name="Boone C."/>
            <person name="Martinho R.G."/>
            <person name="Arnesen T."/>
        </authorList>
    </citation>
    <scope>FUNCTION</scope>
    <scope>CATALYTIC ACTIVITY</scope>
</reference>
<name>NAA30_HUMAN</name>